<dbReference type="EMBL" id="CU468230">
    <property type="protein sequence ID" value="CAO99831.1"/>
    <property type="molecule type" value="Genomic_DNA"/>
</dbReference>
<dbReference type="SMR" id="B0VQT5"/>
<dbReference type="KEGG" id="abm:ABSDF0440"/>
<dbReference type="HOGENOM" id="CLU_065898_2_2_6"/>
<dbReference type="Proteomes" id="UP000001741">
    <property type="component" value="Chromosome"/>
</dbReference>
<dbReference type="GO" id="GO:0015935">
    <property type="term" value="C:small ribosomal subunit"/>
    <property type="evidence" value="ECO:0007669"/>
    <property type="project" value="InterPro"/>
</dbReference>
<dbReference type="GO" id="GO:0019843">
    <property type="term" value="F:rRNA binding"/>
    <property type="evidence" value="ECO:0007669"/>
    <property type="project" value="UniProtKB-UniRule"/>
</dbReference>
<dbReference type="GO" id="GO:0003735">
    <property type="term" value="F:structural constituent of ribosome"/>
    <property type="evidence" value="ECO:0007669"/>
    <property type="project" value="InterPro"/>
</dbReference>
<dbReference type="GO" id="GO:0006412">
    <property type="term" value="P:translation"/>
    <property type="evidence" value="ECO:0007669"/>
    <property type="project" value="UniProtKB-UniRule"/>
</dbReference>
<dbReference type="FunFam" id="3.30.160.20:FF:000001">
    <property type="entry name" value="30S ribosomal protein S5"/>
    <property type="match status" value="1"/>
</dbReference>
<dbReference type="FunFam" id="3.30.230.10:FF:000002">
    <property type="entry name" value="30S ribosomal protein S5"/>
    <property type="match status" value="1"/>
</dbReference>
<dbReference type="Gene3D" id="3.30.160.20">
    <property type="match status" value="1"/>
</dbReference>
<dbReference type="Gene3D" id="3.30.230.10">
    <property type="match status" value="1"/>
</dbReference>
<dbReference type="HAMAP" id="MF_01307_B">
    <property type="entry name" value="Ribosomal_uS5_B"/>
    <property type="match status" value="1"/>
</dbReference>
<dbReference type="InterPro" id="IPR020568">
    <property type="entry name" value="Ribosomal_Su5_D2-typ_SF"/>
</dbReference>
<dbReference type="InterPro" id="IPR000851">
    <property type="entry name" value="Ribosomal_uS5"/>
</dbReference>
<dbReference type="InterPro" id="IPR005712">
    <property type="entry name" value="Ribosomal_uS5_bac-type"/>
</dbReference>
<dbReference type="InterPro" id="IPR005324">
    <property type="entry name" value="Ribosomal_uS5_C"/>
</dbReference>
<dbReference type="InterPro" id="IPR013810">
    <property type="entry name" value="Ribosomal_uS5_N"/>
</dbReference>
<dbReference type="InterPro" id="IPR018192">
    <property type="entry name" value="Ribosomal_uS5_N_CS"/>
</dbReference>
<dbReference type="InterPro" id="IPR014721">
    <property type="entry name" value="Ribsml_uS5_D2-typ_fold_subgr"/>
</dbReference>
<dbReference type="NCBIfam" id="TIGR01021">
    <property type="entry name" value="rpsE_bact"/>
    <property type="match status" value="1"/>
</dbReference>
<dbReference type="PANTHER" id="PTHR48277">
    <property type="entry name" value="MITOCHONDRIAL RIBOSOMAL PROTEIN S5"/>
    <property type="match status" value="1"/>
</dbReference>
<dbReference type="PANTHER" id="PTHR48277:SF1">
    <property type="entry name" value="MITOCHONDRIAL RIBOSOMAL PROTEIN S5"/>
    <property type="match status" value="1"/>
</dbReference>
<dbReference type="Pfam" id="PF00333">
    <property type="entry name" value="Ribosomal_S5"/>
    <property type="match status" value="1"/>
</dbReference>
<dbReference type="Pfam" id="PF03719">
    <property type="entry name" value="Ribosomal_S5_C"/>
    <property type="match status" value="1"/>
</dbReference>
<dbReference type="SUPFAM" id="SSF54768">
    <property type="entry name" value="dsRNA-binding domain-like"/>
    <property type="match status" value="1"/>
</dbReference>
<dbReference type="SUPFAM" id="SSF54211">
    <property type="entry name" value="Ribosomal protein S5 domain 2-like"/>
    <property type="match status" value="1"/>
</dbReference>
<dbReference type="PROSITE" id="PS00585">
    <property type="entry name" value="RIBOSOMAL_S5"/>
    <property type="match status" value="1"/>
</dbReference>
<dbReference type="PROSITE" id="PS50881">
    <property type="entry name" value="S5_DSRBD"/>
    <property type="match status" value="1"/>
</dbReference>
<keyword id="KW-0687">Ribonucleoprotein</keyword>
<keyword id="KW-0689">Ribosomal protein</keyword>
<keyword id="KW-0694">RNA-binding</keyword>
<keyword id="KW-0699">rRNA-binding</keyword>
<organism>
    <name type="scientific">Acinetobacter baumannii (strain SDF)</name>
    <dbReference type="NCBI Taxonomy" id="509170"/>
    <lineage>
        <taxon>Bacteria</taxon>
        <taxon>Pseudomonadati</taxon>
        <taxon>Pseudomonadota</taxon>
        <taxon>Gammaproteobacteria</taxon>
        <taxon>Moraxellales</taxon>
        <taxon>Moraxellaceae</taxon>
        <taxon>Acinetobacter</taxon>
        <taxon>Acinetobacter calcoaceticus/baumannii complex</taxon>
    </lineage>
</organism>
<gene>
    <name evidence="1" type="primary">rpsE</name>
    <name type="ordered locus">ABSDF0440</name>
</gene>
<sequence>MAKVEQNEGLVEKLVAVDRVAKVVKGGRIFSFTALTVVGDGNGRVGFGRGKAREVPAAISKALEAARRNMITVDLAGTTLQHPVNARHGASRVYMQPASEGTGVIAGGAMRAVLEAAGVHNVLAKCYGSTNAANVVNATFKGLRDMTSPEKVAAKRGKSVEEIQG</sequence>
<protein>
    <recommendedName>
        <fullName evidence="1">Small ribosomal subunit protein uS5</fullName>
    </recommendedName>
    <alternativeName>
        <fullName evidence="2">30S ribosomal protein S5</fullName>
    </alternativeName>
</protein>
<accession>B0VQT5</accession>
<reference key="1">
    <citation type="journal article" date="2008" name="PLoS ONE">
        <title>Comparative analysis of Acinetobacters: three genomes for three lifestyles.</title>
        <authorList>
            <person name="Vallenet D."/>
            <person name="Nordmann P."/>
            <person name="Barbe V."/>
            <person name="Poirel L."/>
            <person name="Mangenot S."/>
            <person name="Bataille E."/>
            <person name="Dossat C."/>
            <person name="Gas S."/>
            <person name="Kreimeyer A."/>
            <person name="Lenoble P."/>
            <person name="Oztas S."/>
            <person name="Poulain J."/>
            <person name="Segurens B."/>
            <person name="Robert C."/>
            <person name="Abergel C."/>
            <person name="Claverie J.-M."/>
            <person name="Raoult D."/>
            <person name="Medigue C."/>
            <person name="Weissenbach J."/>
            <person name="Cruveiller S."/>
        </authorList>
    </citation>
    <scope>NUCLEOTIDE SEQUENCE [LARGE SCALE GENOMIC DNA]</scope>
    <source>
        <strain>SDF</strain>
    </source>
</reference>
<proteinExistence type="inferred from homology"/>
<name>RS5_ACIBS</name>
<evidence type="ECO:0000255" key="1">
    <source>
        <dbReference type="HAMAP-Rule" id="MF_01307"/>
    </source>
</evidence>
<evidence type="ECO:0000305" key="2"/>
<comment type="function">
    <text evidence="1">With S4 and S12 plays an important role in translational accuracy.</text>
</comment>
<comment type="function">
    <text evidence="1">Located at the back of the 30S subunit body where it stabilizes the conformation of the head with respect to the body.</text>
</comment>
<comment type="subunit">
    <text evidence="1">Part of the 30S ribosomal subunit. Contacts proteins S4 and S8.</text>
</comment>
<comment type="domain">
    <text>The N-terminal domain interacts with the head of the 30S subunit; the C-terminal domain interacts with the body and contacts protein S4. The interaction surface between S4 and S5 is involved in control of translational fidelity.</text>
</comment>
<comment type="similarity">
    <text evidence="1">Belongs to the universal ribosomal protein uS5 family.</text>
</comment>
<feature type="chain" id="PRO_1000140829" description="Small ribosomal subunit protein uS5">
    <location>
        <begin position="1"/>
        <end position="165"/>
    </location>
</feature>
<feature type="domain" description="S5 DRBM" evidence="1">
    <location>
        <begin position="10"/>
        <end position="73"/>
    </location>
</feature>